<sequence>MSIRPLTLNGLDEPETSFEELNTTLPRFQSHETLTLEENVPPLSTSTYIPPPSSVGTSDTGTVFSNSTSAFWSNKQADDDQDMEVDQDDEFLNDFQEFQNKKDDFDDAIKTNFHLRNGCRTGPFKNDIFAEEFDRKLSLEDKPRLKQPRSMMELKPKRKLSNSVTSRNLRSGNSVRFKKSMPNLALVNPAIREEEEDEEREREDQREFNYKIDNDTQDTILAKFSSDDEGDFLTGFEELEGEAIDETISSNDKESADHPRFLKKSSSSLPLKISPAQYDIVKHDELLTPGLHRRQRDWNTQQELDSFKEKRSVRHCSNQNVQLNGPAKIKTIKQQIDHNTPMKKGSMIYNPKTMKWEGNENVLSKFSDVDTANRKALLIKNKLQRDADSKKQKYSDLQHARATSRNQKVIGNMILDEQNLRWVSVSEEEADPFAGIPEINLPPVGKSMKKRSSSPFLRSKSQVNTPFVSNDNDGVYQSTAAQARLRKYHSMRTLNGTTETPEISSTFHLSSRALEKFYHEENRWCKKLASWFIPRDETIISVDEETIMDESTVNSKRKSYMYEIRNMVINSTKD</sequence>
<protein>
    <recommendedName>
        <fullName>Mitotic check point protein BFA1</fullName>
    </recommendedName>
    <alternativeName>
        <fullName>Cell cycle arrest protein BFA1</fullName>
    </alternativeName>
</protein>
<comment type="function">
    <text>Part of a checkpoint which monitors spindle integrity and prevents premature exit from mitosis. This cell-cycle arrest depends upon inhibition of the G-protein TEM1 by the BFA1/BUB2 complex.</text>
</comment>
<comment type="subunit">
    <text>Interacts with BUB2.</text>
</comment>
<comment type="interaction">
    <interactant intactId="EBI-3586">
        <id>P47113</id>
    </interactant>
    <interactant intactId="EBI-3824">
        <id>P26448</id>
        <label>BUB2</label>
    </interactant>
    <organismsDiffer>false</organismsDiffer>
    <experiments>5</experiments>
</comment>
<comment type="interaction">
    <interactant intactId="EBI-3586">
        <id>P47113</id>
    </interactant>
    <interactant intactId="EBI-7575">
        <id>P38785</id>
        <label>GIC1</label>
    </interactant>
    <organismsDiffer>false</organismsDiffer>
    <experiments>2</experiments>
</comment>
<comment type="interaction">
    <interactant intactId="EBI-3586">
        <id>P47113</id>
    </interactant>
    <interactant intactId="EBI-19113">
        <id>P38987</id>
        <label>TEM1</label>
    </interactant>
    <organismsDiffer>false</organismsDiffer>
    <experiments>3</experiments>
</comment>
<comment type="subcellular location">
    <subcellularLocation>
        <location>Cytoplasm</location>
        <location>Cytoskeleton</location>
        <location>Spindle pole</location>
    </subcellularLocation>
</comment>
<comment type="PTM">
    <text>Multiply phosphorylated in a cell-cycle-dependent manner with the major phosphorylation occurring in mitosis.</text>
</comment>
<comment type="miscellaneous">
    <text evidence="2">Present with 1380 molecules/cell in log phase SD medium.</text>
</comment>
<comment type="similarity">
    <text evidence="3">To S.pombe byr4.</text>
</comment>
<reference key="1">
    <citation type="journal article" date="1995" name="Yeast">
        <title>Analysis of a 42.5 kb DNA sequence of chromosome X reveals three tRNA genes and 14 new open reading frames including a gene most probably belonging to the family of ubiquitin-protein ligases.</title>
        <authorList>
            <person name="Huang M.-E."/>
            <person name="Chuat J.-C."/>
            <person name="Galibert F."/>
        </authorList>
    </citation>
    <scope>NUCLEOTIDE SEQUENCE [GENOMIC DNA]</scope>
    <source>
        <strain>ATCC 204508 / S288c</strain>
    </source>
</reference>
<reference key="2">
    <citation type="journal article" date="1996" name="EMBO J.">
        <title>Complete nucleotide sequence of Saccharomyces cerevisiae chromosome X.</title>
        <authorList>
            <person name="Galibert F."/>
            <person name="Alexandraki D."/>
            <person name="Baur A."/>
            <person name="Boles E."/>
            <person name="Chalwatzis N."/>
            <person name="Chuat J.-C."/>
            <person name="Coster F."/>
            <person name="Cziepluch C."/>
            <person name="de Haan M."/>
            <person name="Domdey H."/>
            <person name="Durand P."/>
            <person name="Entian K.-D."/>
            <person name="Gatius M."/>
            <person name="Goffeau A."/>
            <person name="Grivell L.A."/>
            <person name="Hennemann A."/>
            <person name="Herbert C.J."/>
            <person name="Heumann K."/>
            <person name="Hilger F."/>
            <person name="Hollenberg C.P."/>
            <person name="Huang M.-E."/>
            <person name="Jacq C."/>
            <person name="Jauniaux J.-C."/>
            <person name="Katsoulou C."/>
            <person name="Kirchrath L."/>
            <person name="Kleine K."/>
            <person name="Kordes E."/>
            <person name="Koetter P."/>
            <person name="Liebl S."/>
            <person name="Louis E.J."/>
            <person name="Manus V."/>
            <person name="Mewes H.-W."/>
            <person name="Miosga T."/>
            <person name="Obermaier B."/>
            <person name="Perea J."/>
            <person name="Pohl T.M."/>
            <person name="Portetelle D."/>
            <person name="Pujol A."/>
            <person name="Purnelle B."/>
            <person name="Ramezani Rad M."/>
            <person name="Rasmussen S.W."/>
            <person name="Rose M."/>
            <person name="Rossau R."/>
            <person name="Schaaff-Gerstenschlaeger I."/>
            <person name="Smits P.H.M."/>
            <person name="Scarcez T."/>
            <person name="Soriano N."/>
            <person name="To Van D."/>
            <person name="Tzermia M."/>
            <person name="Van Broekhoven A."/>
            <person name="Vandenbol M."/>
            <person name="Wedler H."/>
            <person name="von Wettstein D."/>
            <person name="Wambutt R."/>
            <person name="Zagulski M."/>
            <person name="Zollner A."/>
            <person name="Karpfinger-Hartl L."/>
        </authorList>
    </citation>
    <scope>NUCLEOTIDE SEQUENCE [LARGE SCALE GENOMIC DNA]</scope>
    <source>
        <strain>ATCC 204508 / S288c</strain>
    </source>
</reference>
<reference key="3">
    <citation type="journal article" date="2014" name="G3 (Bethesda)">
        <title>The reference genome sequence of Saccharomyces cerevisiae: Then and now.</title>
        <authorList>
            <person name="Engel S.R."/>
            <person name="Dietrich F.S."/>
            <person name="Fisk D.G."/>
            <person name="Binkley G."/>
            <person name="Balakrishnan R."/>
            <person name="Costanzo M.C."/>
            <person name="Dwight S.S."/>
            <person name="Hitz B.C."/>
            <person name="Karra K."/>
            <person name="Nash R.S."/>
            <person name="Weng S."/>
            <person name="Wong E.D."/>
            <person name="Lloyd P."/>
            <person name="Skrzypek M.S."/>
            <person name="Miyasato S.R."/>
            <person name="Simison M."/>
            <person name="Cherry J.M."/>
        </authorList>
    </citation>
    <scope>GENOME REANNOTATION</scope>
    <source>
        <strain>ATCC 204508 / S288c</strain>
    </source>
</reference>
<reference key="4">
    <citation type="journal article" date="1999" name="Proc. Natl. Acad. Sci. U.S.A.">
        <title>Bifurcation of the mitotic checkpoint pathway in budding yeast.</title>
        <authorList>
            <person name="Li R."/>
        </authorList>
    </citation>
    <scope>CHARACTERIZATION</scope>
</reference>
<reference key="5">
    <citation type="journal article" date="2001" name="J. Cell Sci.">
        <title>The Bub2-dependent mitotic pathway in yeast acts every cell cycle and regulates cytokinesis.</title>
        <authorList>
            <person name="Lee S.E."/>
            <person name="Jensen S."/>
            <person name="Frenz L.M."/>
            <person name="Johnson A.L."/>
            <person name="Fesquet D."/>
            <person name="Johnston L.H."/>
        </authorList>
    </citation>
    <scope>CHARACTERIZATION</scope>
</reference>
<reference key="6">
    <citation type="journal article" date="2003" name="Nature">
        <title>Global analysis of protein expression in yeast.</title>
        <authorList>
            <person name="Ghaemmaghami S."/>
            <person name="Huh W.-K."/>
            <person name="Bower K."/>
            <person name="Howson R.W."/>
            <person name="Belle A."/>
            <person name="Dephoure N."/>
            <person name="O'Shea E.K."/>
            <person name="Weissman J.S."/>
        </authorList>
    </citation>
    <scope>LEVEL OF PROTEIN EXPRESSION [LARGE SCALE ANALYSIS]</scope>
</reference>
<reference key="7">
    <citation type="journal article" date="2009" name="Science">
        <title>Global analysis of Cdk1 substrate phosphorylation sites provides insights into evolution.</title>
        <authorList>
            <person name="Holt L.J."/>
            <person name="Tuch B.B."/>
            <person name="Villen J."/>
            <person name="Johnson A.D."/>
            <person name="Gygi S.P."/>
            <person name="Morgan D.O."/>
        </authorList>
    </citation>
    <scope>PHOSPHORYLATION [LARGE SCALE ANALYSIS] AT SER-317</scope>
    <scope>IDENTIFICATION BY MASS SPECTROMETRY [LARGE SCALE ANALYSIS]</scope>
</reference>
<evidence type="ECO:0000256" key="1">
    <source>
        <dbReference type="SAM" id="MobiDB-lite"/>
    </source>
</evidence>
<evidence type="ECO:0000269" key="2">
    <source>
    </source>
</evidence>
<evidence type="ECO:0000305" key="3"/>
<evidence type="ECO:0007744" key="4">
    <source>
    </source>
</evidence>
<feature type="chain" id="PRO_0000064913" description="Mitotic check point protein BFA1">
    <location>
        <begin position="1"/>
        <end position="574"/>
    </location>
</feature>
<feature type="region of interest" description="Disordered" evidence="1">
    <location>
        <begin position="154"/>
        <end position="173"/>
    </location>
</feature>
<feature type="compositionally biased region" description="Polar residues" evidence="1">
    <location>
        <begin position="161"/>
        <end position="173"/>
    </location>
</feature>
<feature type="modified residue" description="Phosphoserine" evidence="4">
    <location>
        <position position="317"/>
    </location>
</feature>
<proteinExistence type="evidence at protein level"/>
<accession>P47113</accession>
<accession>D6VWM4</accession>
<keyword id="KW-0131">Cell cycle</keyword>
<keyword id="KW-0132">Cell division</keyword>
<keyword id="KW-0963">Cytoplasm</keyword>
<keyword id="KW-0206">Cytoskeleton</keyword>
<keyword id="KW-0498">Mitosis</keyword>
<keyword id="KW-0597">Phosphoprotein</keyword>
<keyword id="KW-1185">Reference proteome</keyword>
<name>BFA1_YEAST</name>
<gene>
    <name type="primary">BFA1</name>
    <name type="ordered locus">YJR053W</name>
    <name type="ORF">J1667</name>
</gene>
<dbReference type="EMBL" id="L36344">
    <property type="protein sequence ID" value="AAA88756.1"/>
    <property type="molecule type" value="Genomic_DNA"/>
</dbReference>
<dbReference type="EMBL" id="Z49553">
    <property type="protein sequence ID" value="CAA89581.1"/>
    <property type="molecule type" value="Genomic_DNA"/>
</dbReference>
<dbReference type="EMBL" id="BK006943">
    <property type="protein sequence ID" value="DAA08840.1"/>
    <property type="molecule type" value="Genomic_DNA"/>
</dbReference>
<dbReference type="PIR" id="S57072">
    <property type="entry name" value="S57072"/>
</dbReference>
<dbReference type="RefSeq" id="NP_012587.3">
    <property type="nucleotide sequence ID" value="NM_001181711.3"/>
</dbReference>
<dbReference type="BioGRID" id="33807">
    <property type="interactions" value="388"/>
</dbReference>
<dbReference type="ComplexPortal" id="CPX-964">
    <property type="entry name" value="GTPase-Activating Protein BFA1-BUB2 complex"/>
</dbReference>
<dbReference type="DIP" id="DIP-4825N"/>
<dbReference type="FunCoup" id="P47113">
    <property type="interactions" value="413"/>
</dbReference>
<dbReference type="IntAct" id="P47113">
    <property type="interactions" value="24"/>
</dbReference>
<dbReference type="MINT" id="P47113"/>
<dbReference type="STRING" id="4932.YJR053W"/>
<dbReference type="iPTMnet" id="P47113"/>
<dbReference type="PaxDb" id="4932-YJR053W"/>
<dbReference type="PeptideAtlas" id="P47113"/>
<dbReference type="EnsemblFungi" id="YJR053W_mRNA">
    <property type="protein sequence ID" value="YJR053W"/>
    <property type="gene ID" value="YJR053W"/>
</dbReference>
<dbReference type="GeneID" id="853513"/>
<dbReference type="KEGG" id="sce:YJR053W"/>
<dbReference type="AGR" id="SGD:S000003814"/>
<dbReference type="SGD" id="S000003814">
    <property type="gene designation" value="BFA1"/>
</dbReference>
<dbReference type="VEuPathDB" id="FungiDB:YJR053W"/>
<dbReference type="eggNOG" id="ENOG502R6H5">
    <property type="taxonomic scope" value="Eukaryota"/>
</dbReference>
<dbReference type="HOGENOM" id="CLU_037140_0_0_1"/>
<dbReference type="InParanoid" id="P47113"/>
<dbReference type="OMA" id="QEIDHNT"/>
<dbReference type="OrthoDB" id="19159at2759"/>
<dbReference type="BioCyc" id="YEAST:G3O-31687-MONOMER"/>
<dbReference type="BioGRID-ORCS" id="853513">
    <property type="hits" value="5 hits in 10 CRISPR screens"/>
</dbReference>
<dbReference type="CD-CODE" id="876000F7">
    <property type="entry name" value="Centrosome"/>
</dbReference>
<dbReference type="PRO" id="PR:P47113"/>
<dbReference type="Proteomes" id="UP000002311">
    <property type="component" value="Chromosome X"/>
</dbReference>
<dbReference type="RNAct" id="P47113">
    <property type="molecule type" value="protein"/>
</dbReference>
<dbReference type="GO" id="GO:1990334">
    <property type="term" value="C:Bfa1-Bub2 complex"/>
    <property type="evidence" value="ECO:0000314"/>
    <property type="project" value="SGD"/>
</dbReference>
<dbReference type="GO" id="GO:0005737">
    <property type="term" value="C:cytoplasm"/>
    <property type="evidence" value="ECO:0007669"/>
    <property type="project" value="UniProtKB-KW"/>
</dbReference>
<dbReference type="GO" id="GO:0044732">
    <property type="term" value="C:mitotic spindle pole body"/>
    <property type="evidence" value="ECO:0000318"/>
    <property type="project" value="GO_Central"/>
</dbReference>
<dbReference type="GO" id="GO:0000922">
    <property type="term" value="C:spindle pole"/>
    <property type="evidence" value="ECO:0007669"/>
    <property type="project" value="UniProtKB-SubCell"/>
</dbReference>
<dbReference type="GO" id="GO:0005816">
    <property type="term" value="C:spindle pole body"/>
    <property type="evidence" value="ECO:0000314"/>
    <property type="project" value="SGD"/>
</dbReference>
<dbReference type="GO" id="GO:0005092">
    <property type="term" value="F:GDP-dissociation inhibitor activity"/>
    <property type="evidence" value="ECO:0000314"/>
    <property type="project" value="SGD"/>
</dbReference>
<dbReference type="GO" id="GO:0005096">
    <property type="term" value="F:GTPase activator activity"/>
    <property type="evidence" value="ECO:0007669"/>
    <property type="project" value="InterPro"/>
</dbReference>
<dbReference type="GO" id="GO:0051301">
    <property type="term" value="P:cell division"/>
    <property type="evidence" value="ECO:0007669"/>
    <property type="project" value="UniProtKB-KW"/>
</dbReference>
<dbReference type="GO" id="GO:0031578">
    <property type="term" value="P:mitotic spindle orientation checkpoint signaling"/>
    <property type="evidence" value="ECO:0000314"/>
    <property type="project" value="ComplexPortal"/>
</dbReference>
<dbReference type="GO" id="GO:0001100">
    <property type="term" value="P:negative regulation of exit from mitosis"/>
    <property type="evidence" value="ECO:0000315"/>
    <property type="project" value="SGD"/>
</dbReference>
<dbReference type="InterPro" id="IPR034586">
    <property type="entry name" value="Bfa1/Byr4"/>
</dbReference>
<dbReference type="PANTHER" id="PTHR35140">
    <property type="entry name" value="MITOTIC CHECK POINT PROTEIN BFA1"/>
    <property type="match status" value="1"/>
</dbReference>
<dbReference type="PANTHER" id="PTHR35140:SF1">
    <property type="entry name" value="MITOTIC CHECK POINT PROTEIN BFA1"/>
    <property type="match status" value="1"/>
</dbReference>
<organism>
    <name type="scientific">Saccharomyces cerevisiae (strain ATCC 204508 / S288c)</name>
    <name type="common">Baker's yeast</name>
    <dbReference type="NCBI Taxonomy" id="559292"/>
    <lineage>
        <taxon>Eukaryota</taxon>
        <taxon>Fungi</taxon>
        <taxon>Dikarya</taxon>
        <taxon>Ascomycota</taxon>
        <taxon>Saccharomycotina</taxon>
        <taxon>Saccharomycetes</taxon>
        <taxon>Saccharomycetales</taxon>
        <taxon>Saccharomycetaceae</taxon>
        <taxon>Saccharomyces</taxon>
    </lineage>
</organism>